<sequence length="351" mass="36227">MAAVPSTISWPQRLEQLLQGQDLSASEASSLMQAWLAEELSPVQTGAFLAGLRAKGMVADELAAMASVLRGACPLPCDRPNLAMVDTCGTGGDGADTFNISTAVAFTAAALGVNVAKHGNRSASGKVGSADVLEGLGLNLKAPLASVVEAISTTGVTFLFAPAWHPALVNLAPLRRSLGVRTVFNLLGPLVNPLQPQAQVLGVARADLLDPMAGALDQLGLDRAVVVHGAGGLDEASLAGANELRMVEAGKPIATRFVSPDDLGLAAAPLEALRGGDLADNQRILENVLKGEATPAQIDVVAFNTALVLWVAGVELDLKAAARRASDTLRDGLPWQKLQDLQRALSHGNGQ</sequence>
<evidence type="ECO:0000255" key="1">
    <source>
        <dbReference type="HAMAP-Rule" id="MF_00211"/>
    </source>
</evidence>
<name>TRPD_SYNS9</name>
<protein>
    <recommendedName>
        <fullName evidence="1">Anthranilate phosphoribosyltransferase</fullName>
        <ecNumber evidence="1">2.4.2.18</ecNumber>
    </recommendedName>
</protein>
<comment type="function">
    <text evidence="1">Catalyzes the transfer of the phosphoribosyl group of 5-phosphorylribose-1-pyrophosphate (PRPP) to anthranilate to yield N-(5'-phosphoribosyl)-anthranilate (PRA).</text>
</comment>
<comment type="catalytic activity">
    <reaction evidence="1">
        <text>N-(5-phospho-beta-D-ribosyl)anthranilate + diphosphate = 5-phospho-alpha-D-ribose 1-diphosphate + anthranilate</text>
        <dbReference type="Rhea" id="RHEA:11768"/>
        <dbReference type="ChEBI" id="CHEBI:16567"/>
        <dbReference type="ChEBI" id="CHEBI:18277"/>
        <dbReference type="ChEBI" id="CHEBI:33019"/>
        <dbReference type="ChEBI" id="CHEBI:58017"/>
        <dbReference type="EC" id="2.4.2.18"/>
    </reaction>
</comment>
<comment type="cofactor">
    <cofactor evidence="1">
        <name>Mg(2+)</name>
        <dbReference type="ChEBI" id="CHEBI:18420"/>
    </cofactor>
    <text evidence="1">Binds 2 magnesium ions per monomer.</text>
</comment>
<comment type="pathway">
    <text evidence="1">Amino-acid biosynthesis; L-tryptophan biosynthesis; L-tryptophan from chorismate: step 2/5.</text>
</comment>
<comment type="subunit">
    <text evidence="1">Homodimer.</text>
</comment>
<comment type="similarity">
    <text evidence="1">Belongs to the anthranilate phosphoribosyltransferase family.</text>
</comment>
<accession>Q3AXD5</accession>
<feature type="chain" id="PRO_0000325469" description="Anthranilate phosphoribosyltransferase">
    <location>
        <begin position="1"/>
        <end position="351"/>
    </location>
</feature>
<feature type="binding site" evidence="1">
    <location>
        <position position="89"/>
    </location>
    <ligand>
        <name>5-phospho-alpha-D-ribose 1-diphosphate</name>
        <dbReference type="ChEBI" id="CHEBI:58017"/>
    </ligand>
</feature>
<feature type="binding site" evidence="1">
    <location>
        <position position="89"/>
    </location>
    <ligand>
        <name>anthranilate</name>
        <dbReference type="ChEBI" id="CHEBI:16567"/>
        <label>1</label>
    </ligand>
</feature>
<feature type="binding site" evidence="1">
    <location>
        <begin position="92"/>
        <end position="93"/>
    </location>
    <ligand>
        <name>5-phospho-alpha-D-ribose 1-diphosphate</name>
        <dbReference type="ChEBI" id="CHEBI:58017"/>
    </ligand>
</feature>
<feature type="binding site" evidence="1">
    <location>
        <position position="97"/>
    </location>
    <ligand>
        <name>5-phospho-alpha-D-ribose 1-diphosphate</name>
        <dbReference type="ChEBI" id="CHEBI:58017"/>
    </ligand>
</feature>
<feature type="binding site" evidence="1">
    <location>
        <begin position="99"/>
        <end position="102"/>
    </location>
    <ligand>
        <name>5-phospho-alpha-D-ribose 1-diphosphate</name>
        <dbReference type="ChEBI" id="CHEBI:58017"/>
    </ligand>
</feature>
<feature type="binding site" evidence="1">
    <location>
        <position position="101"/>
    </location>
    <ligand>
        <name>Mg(2+)</name>
        <dbReference type="ChEBI" id="CHEBI:18420"/>
        <label>1</label>
    </ligand>
</feature>
<feature type="binding site" evidence="1">
    <location>
        <begin position="117"/>
        <end position="125"/>
    </location>
    <ligand>
        <name>5-phospho-alpha-D-ribose 1-diphosphate</name>
        <dbReference type="ChEBI" id="CHEBI:58017"/>
    </ligand>
</feature>
<feature type="binding site" evidence="1">
    <location>
        <position position="120"/>
    </location>
    <ligand>
        <name>anthranilate</name>
        <dbReference type="ChEBI" id="CHEBI:16567"/>
        <label>1</label>
    </ligand>
</feature>
<feature type="binding site" evidence="1">
    <location>
        <position position="129"/>
    </location>
    <ligand>
        <name>5-phospho-alpha-D-ribose 1-diphosphate</name>
        <dbReference type="ChEBI" id="CHEBI:58017"/>
    </ligand>
</feature>
<feature type="binding site" evidence="1">
    <location>
        <position position="175"/>
    </location>
    <ligand>
        <name>anthranilate</name>
        <dbReference type="ChEBI" id="CHEBI:16567"/>
        <label>2</label>
    </ligand>
</feature>
<feature type="binding site" evidence="1">
    <location>
        <position position="234"/>
    </location>
    <ligand>
        <name>Mg(2+)</name>
        <dbReference type="ChEBI" id="CHEBI:18420"/>
        <label>2</label>
    </ligand>
</feature>
<feature type="binding site" evidence="1">
    <location>
        <position position="235"/>
    </location>
    <ligand>
        <name>Mg(2+)</name>
        <dbReference type="ChEBI" id="CHEBI:18420"/>
        <label>1</label>
    </ligand>
</feature>
<feature type="binding site" evidence="1">
    <location>
        <position position="235"/>
    </location>
    <ligand>
        <name>Mg(2+)</name>
        <dbReference type="ChEBI" id="CHEBI:18420"/>
        <label>2</label>
    </ligand>
</feature>
<reference key="1">
    <citation type="submission" date="2005-08" db="EMBL/GenBank/DDBJ databases">
        <title>Complete sequence of Synechococcus sp. CC9902.</title>
        <authorList>
            <person name="Copeland A."/>
            <person name="Lucas S."/>
            <person name="Lapidus A."/>
            <person name="Barry K."/>
            <person name="Detter J.C."/>
            <person name="Glavina T."/>
            <person name="Hammon N."/>
            <person name="Israni S."/>
            <person name="Pitluck S."/>
            <person name="Martinez M."/>
            <person name="Schmutz J."/>
            <person name="Larimer F."/>
            <person name="Land M."/>
            <person name="Kyrpides N."/>
            <person name="Ivanova N."/>
            <person name="Richardson P."/>
        </authorList>
    </citation>
    <scope>NUCLEOTIDE SEQUENCE [LARGE SCALE GENOMIC DNA]</scope>
    <source>
        <strain>CC9902</strain>
    </source>
</reference>
<proteinExistence type="inferred from homology"/>
<gene>
    <name evidence="1" type="primary">trpD</name>
    <name type="ordered locus">Syncc9902_1308</name>
</gene>
<dbReference type="EC" id="2.4.2.18" evidence="1"/>
<dbReference type="EMBL" id="CP000097">
    <property type="protein sequence ID" value="ABB26272.1"/>
    <property type="molecule type" value="Genomic_DNA"/>
</dbReference>
<dbReference type="RefSeq" id="WP_011360097.1">
    <property type="nucleotide sequence ID" value="NC_007513.1"/>
</dbReference>
<dbReference type="SMR" id="Q3AXD5"/>
<dbReference type="STRING" id="316279.Syncc9902_1308"/>
<dbReference type="KEGG" id="sye:Syncc9902_1308"/>
<dbReference type="eggNOG" id="COG0547">
    <property type="taxonomic scope" value="Bacteria"/>
</dbReference>
<dbReference type="HOGENOM" id="CLU_034315_2_1_3"/>
<dbReference type="OrthoDB" id="9806430at2"/>
<dbReference type="UniPathway" id="UPA00035">
    <property type="reaction ID" value="UER00041"/>
</dbReference>
<dbReference type="Proteomes" id="UP000002712">
    <property type="component" value="Chromosome"/>
</dbReference>
<dbReference type="GO" id="GO:0005829">
    <property type="term" value="C:cytosol"/>
    <property type="evidence" value="ECO:0007669"/>
    <property type="project" value="TreeGrafter"/>
</dbReference>
<dbReference type="GO" id="GO:0004048">
    <property type="term" value="F:anthranilate phosphoribosyltransferase activity"/>
    <property type="evidence" value="ECO:0007669"/>
    <property type="project" value="UniProtKB-UniRule"/>
</dbReference>
<dbReference type="GO" id="GO:0000287">
    <property type="term" value="F:magnesium ion binding"/>
    <property type="evidence" value="ECO:0007669"/>
    <property type="project" value="UniProtKB-UniRule"/>
</dbReference>
<dbReference type="GO" id="GO:0000162">
    <property type="term" value="P:L-tryptophan biosynthetic process"/>
    <property type="evidence" value="ECO:0007669"/>
    <property type="project" value="UniProtKB-UniRule"/>
</dbReference>
<dbReference type="FunFam" id="3.40.1030.10:FF:000002">
    <property type="entry name" value="Anthranilate phosphoribosyltransferase"/>
    <property type="match status" value="1"/>
</dbReference>
<dbReference type="Gene3D" id="3.40.1030.10">
    <property type="entry name" value="Nucleoside phosphorylase/phosphoribosyltransferase catalytic domain"/>
    <property type="match status" value="1"/>
</dbReference>
<dbReference type="Gene3D" id="1.20.970.10">
    <property type="entry name" value="Transferase, Pyrimidine Nucleoside Phosphorylase, Chain C"/>
    <property type="match status" value="1"/>
</dbReference>
<dbReference type="HAMAP" id="MF_00211">
    <property type="entry name" value="TrpD"/>
    <property type="match status" value="1"/>
</dbReference>
<dbReference type="InterPro" id="IPR005940">
    <property type="entry name" value="Anthranilate_Pribosyl_Tfrase"/>
</dbReference>
<dbReference type="InterPro" id="IPR000312">
    <property type="entry name" value="Glycosyl_Trfase_fam3"/>
</dbReference>
<dbReference type="InterPro" id="IPR017459">
    <property type="entry name" value="Glycosyl_Trfase_fam3_N_dom"/>
</dbReference>
<dbReference type="InterPro" id="IPR036320">
    <property type="entry name" value="Glycosyl_Trfase_fam3_N_dom_sf"/>
</dbReference>
<dbReference type="InterPro" id="IPR035902">
    <property type="entry name" value="Nuc_phospho_transferase"/>
</dbReference>
<dbReference type="NCBIfam" id="TIGR01245">
    <property type="entry name" value="trpD"/>
    <property type="match status" value="1"/>
</dbReference>
<dbReference type="PANTHER" id="PTHR43285">
    <property type="entry name" value="ANTHRANILATE PHOSPHORIBOSYLTRANSFERASE"/>
    <property type="match status" value="1"/>
</dbReference>
<dbReference type="PANTHER" id="PTHR43285:SF2">
    <property type="entry name" value="ANTHRANILATE PHOSPHORIBOSYLTRANSFERASE"/>
    <property type="match status" value="1"/>
</dbReference>
<dbReference type="Pfam" id="PF02885">
    <property type="entry name" value="Glycos_trans_3N"/>
    <property type="match status" value="1"/>
</dbReference>
<dbReference type="Pfam" id="PF00591">
    <property type="entry name" value="Glycos_transf_3"/>
    <property type="match status" value="1"/>
</dbReference>
<dbReference type="SUPFAM" id="SSF52418">
    <property type="entry name" value="Nucleoside phosphorylase/phosphoribosyltransferase catalytic domain"/>
    <property type="match status" value="1"/>
</dbReference>
<dbReference type="SUPFAM" id="SSF47648">
    <property type="entry name" value="Nucleoside phosphorylase/phosphoribosyltransferase N-terminal domain"/>
    <property type="match status" value="1"/>
</dbReference>
<organism>
    <name type="scientific">Synechococcus sp. (strain CC9902)</name>
    <dbReference type="NCBI Taxonomy" id="316279"/>
    <lineage>
        <taxon>Bacteria</taxon>
        <taxon>Bacillati</taxon>
        <taxon>Cyanobacteriota</taxon>
        <taxon>Cyanophyceae</taxon>
        <taxon>Synechococcales</taxon>
        <taxon>Synechococcaceae</taxon>
        <taxon>Synechococcus</taxon>
    </lineage>
</organism>
<keyword id="KW-0028">Amino-acid biosynthesis</keyword>
<keyword id="KW-0057">Aromatic amino acid biosynthesis</keyword>
<keyword id="KW-0328">Glycosyltransferase</keyword>
<keyword id="KW-0460">Magnesium</keyword>
<keyword id="KW-0479">Metal-binding</keyword>
<keyword id="KW-1185">Reference proteome</keyword>
<keyword id="KW-0808">Transferase</keyword>
<keyword id="KW-0822">Tryptophan biosynthesis</keyword>